<organism>
    <name type="scientific">Verminephrobacter eiseniae (strain EF01-2)</name>
    <dbReference type="NCBI Taxonomy" id="391735"/>
    <lineage>
        <taxon>Bacteria</taxon>
        <taxon>Pseudomonadati</taxon>
        <taxon>Pseudomonadota</taxon>
        <taxon>Betaproteobacteria</taxon>
        <taxon>Burkholderiales</taxon>
        <taxon>Comamonadaceae</taxon>
        <taxon>Verminephrobacter</taxon>
    </lineage>
</organism>
<dbReference type="EMBL" id="CP000542">
    <property type="protein sequence ID" value="ABM58009.1"/>
    <property type="molecule type" value="Genomic_DNA"/>
</dbReference>
<dbReference type="RefSeq" id="WP_011810012.1">
    <property type="nucleotide sequence ID" value="NC_008786.1"/>
</dbReference>
<dbReference type="SMR" id="A1WK52"/>
<dbReference type="STRING" id="391735.Veis_2261"/>
<dbReference type="GeneID" id="76460824"/>
<dbReference type="KEGG" id="vei:Veis_2261"/>
<dbReference type="eggNOG" id="COG0081">
    <property type="taxonomic scope" value="Bacteria"/>
</dbReference>
<dbReference type="HOGENOM" id="CLU_062853_0_0_4"/>
<dbReference type="OrthoDB" id="9803740at2"/>
<dbReference type="Proteomes" id="UP000000374">
    <property type="component" value="Chromosome"/>
</dbReference>
<dbReference type="GO" id="GO:0022625">
    <property type="term" value="C:cytosolic large ribosomal subunit"/>
    <property type="evidence" value="ECO:0007669"/>
    <property type="project" value="TreeGrafter"/>
</dbReference>
<dbReference type="GO" id="GO:0019843">
    <property type="term" value="F:rRNA binding"/>
    <property type="evidence" value="ECO:0007669"/>
    <property type="project" value="UniProtKB-UniRule"/>
</dbReference>
<dbReference type="GO" id="GO:0003735">
    <property type="term" value="F:structural constituent of ribosome"/>
    <property type="evidence" value="ECO:0007669"/>
    <property type="project" value="InterPro"/>
</dbReference>
<dbReference type="GO" id="GO:0000049">
    <property type="term" value="F:tRNA binding"/>
    <property type="evidence" value="ECO:0007669"/>
    <property type="project" value="UniProtKB-KW"/>
</dbReference>
<dbReference type="GO" id="GO:0006417">
    <property type="term" value="P:regulation of translation"/>
    <property type="evidence" value="ECO:0007669"/>
    <property type="project" value="UniProtKB-KW"/>
</dbReference>
<dbReference type="GO" id="GO:0006412">
    <property type="term" value="P:translation"/>
    <property type="evidence" value="ECO:0007669"/>
    <property type="project" value="UniProtKB-UniRule"/>
</dbReference>
<dbReference type="CDD" id="cd00403">
    <property type="entry name" value="Ribosomal_L1"/>
    <property type="match status" value="1"/>
</dbReference>
<dbReference type="FunFam" id="3.40.50.790:FF:000001">
    <property type="entry name" value="50S ribosomal protein L1"/>
    <property type="match status" value="1"/>
</dbReference>
<dbReference type="Gene3D" id="3.30.190.20">
    <property type="match status" value="1"/>
</dbReference>
<dbReference type="Gene3D" id="3.40.50.790">
    <property type="match status" value="1"/>
</dbReference>
<dbReference type="HAMAP" id="MF_01318_B">
    <property type="entry name" value="Ribosomal_uL1_B"/>
    <property type="match status" value="1"/>
</dbReference>
<dbReference type="InterPro" id="IPR005878">
    <property type="entry name" value="Ribosom_uL1_bac-type"/>
</dbReference>
<dbReference type="InterPro" id="IPR002143">
    <property type="entry name" value="Ribosomal_uL1"/>
</dbReference>
<dbReference type="InterPro" id="IPR023674">
    <property type="entry name" value="Ribosomal_uL1-like"/>
</dbReference>
<dbReference type="InterPro" id="IPR028364">
    <property type="entry name" value="Ribosomal_uL1/biogenesis"/>
</dbReference>
<dbReference type="InterPro" id="IPR016095">
    <property type="entry name" value="Ribosomal_uL1_3-a/b-sand"/>
</dbReference>
<dbReference type="InterPro" id="IPR023673">
    <property type="entry name" value="Ribosomal_uL1_CS"/>
</dbReference>
<dbReference type="NCBIfam" id="TIGR01169">
    <property type="entry name" value="rplA_bact"/>
    <property type="match status" value="1"/>
</dbReference>
<dbReference type="PANTHER" id="PTHR36427">
    <property type="entry name" value="54S RIBOSOMAL PROTEIN L1, MITOCHONDRIAL"/>
    <property type="match status" value="1"/>
</dbReference>
<dbReference type="PANTHER" id="PTHR36427:SF3">
    <property type="entry name" value="LARGE RIBOSOMAL SUBUNIT PROTEIN UL1M"/>
    <property type="match status" value="1"/>
</dbReference>
<dbReference type="Pfam" id="PF00687">
    <property type="entry name" value="Ribosomal_L1"/>
    <property type="match status" value="1"/>
</dbReference>
<dbReference type="PIRSF" id="PIRSF002155">
    <property type="entry name" value="Ribosomal_L1"/>
    <property type="match status" value="1"/>
</dbReference>
<dbReference type="SUPFAM" id="SSF56808">
    <property type="entry name" value="Ribosomal protein L1"/>
    <property type="match status" value="1"/>
</dbReference>
<dbReference type="PROSITE" id="PS01199">
    <property type="entry name" value="RIBOSOMAL_L1"/>
    <property type="match status" value="1"/>
</dbReference>
<sequence length="231" mass="24039">MPQLTKKQKAMQGKVDSTRLYAFTDALVLVKQAATAKFDESIDVAVQLGIDAKKSDQVVRGAVVLPNGTGKITRVAVFAQGAKAEEAKAAGADVVGMDDLAAMVKAGDMPFDVVIAAPDAMRVVGTLGQILGPRGLMPNPKVGTVTPDVALAVKNAKAGQVQFRANKAGIVHSTIGRRSFDDAKLQGNLAALIDALNKTKPASSKGQYLRKLALSSTMGVGVRVDTQSITV</sequence>
<protein>
    <recommendedName>
        <fullName evidence="1">Large ribosomal subunit protein uL1</fullName>
    </recommendedName>
    <alternativeName>
        <fullName evidence="2">50S ribosomal protein L1</fullName>
    </alternativeName>
</protein>
<comment type="function">
    <text evidence="1">Binds directly to 23S rRNA. The L1 stalk is quite mobile in the ribosome, and is involved in E site tRNA release.</text>
</comment>
<comment type="function">
    <text evidence="1">Protein L1 is also a translational repressor protein, it controls the translation of the L11 operon by binding to its mRNA.</text>
</comment>
<comment type="subunit">
    <text evidence="1">Part of the 50S ribosomal subunit.</text>
</comment>
<comment type="similarity">
    <text evidence="1">Belongs to the universal ribosomal protein uL1 family.</text>
</comment>
<keyword id="KW-1185">Reference proteome</keyword>
<keyword id="KW-0678">Repressor</keyword>
<keyword id="KW-0687">Ribonucleoprotein</keyword>
<keyword id="KW-0689">Ribosomal protein</keyword>
<keyword id="KW-0694">RNA-binding</keyword>
<keyword id="KW-0699">rRNA-binding</keyword>
<keyword id="KW-0810">Translation regulation</keyword>
<keyword id="KW-0820">tRNA-binding</keyword>
<name>RL1_VEREI</name>
<reference key="1">
    <citation type="submission" date="2006-12" db="EMBL/GenBank/DDBJ databases">
        <title>Complete sequence of chromosome 1 of Verminephrobacter eiseniae EF01-2.</title>
        <authorList>
            <person name="Copeland A."/>
            <person name="Lucas S."/>
            <person name="Lapidus A."/>
            <person name="Barry K."/>
            <person name="Detter J.C."/>
            <person name="Glavina del Rio T."/>
            <person name="Dalin E."/>
            <person name="Tice H."/>
            <person name="Pitluck S."/>
            <person name="Chertkov O."/>
            <person name="Brettin T."/>
            <person name="Bruce D."/>
            <person name="Han C."/>
            <person name="Tapia R."/>
            <person name="Gilna P."/>
            <person name="Schmutz J."/>
            <person name="Larimer F."/>
            <person name="Land M."/>
            <person name="Hauser L."/>
            <person name="Kyrpides N."/>
            <person name="Kim E."/>
            <person name="Stahl D."/>
            <person name="Richardson P."/>
        </authorList>
    </citation>
    <scope>NUCLEOTIDE SEQUENCE [LARGE SCALE GENOMIC DNA]</scope>
    <source>
        <strain>EF01-2</strain>
    </source>
</reference>
<evidence type="ECO:0000255" key="1">
    <source>
        <dbReference type="HAMAP-Rule" id="MF_01318"/>
    </source>
</evidence>
<evidence type="ECO:0000305" key="2"/>
<feature type="chain" id="PRO_0000308136" description="Large ribosomal subunit protein uL1">
    <location>
        <begin position="1"/>
        <end position="231"/>
    </location>
</feature>
<proteinExistence type="inferred from homology"/>
<accession>A1WK52</accession>
<gene>
    <name evidence="1" type="primary">rplA</name>
    <name type="ordered locus">Veis_2261</name>
</gene>